<name>RPOA_PROA2</name>
<comment type="function">
    <text evidence="1">DNA-dependent RNA polymerase catalyzes the transcription of DNA into RNA using the four ribonucleoside triphosphates as substrates.</text>
</comment>
<comment type="catalytic activity">
    <reaction evidence="1">
        <text>RNA(n) + a ribonucleoside 5'-triphosphate = RNA(n+1) + diphosphate</text>
        <dbReference type="Rhea" id="RHEA:21248"/>
        <dbReference type="Rhea" id="RHEA-COMP:14527"/>
        <dbReference type="Rhea" id="RHEA-COMP:17342"/>
        <dbReference type="ChEBI" id="CHEBI:33019"/>
        <dbReference type="ChEBI" id="CHEBI:61557"/>
        <dbReference type="ChEBI" id="CHEBI:140395"/>
        <dbReference type="EC" id="2.7.7.6"/>
    </reaction>
</comment>
<comment type="subunit">
    <text evidence="1">Homodimer. The RNAP catalytic core consists of 2 alpha, 1 beta, 1 beta' and 1 omega subunit. When a sigma factor is associated with the core the holoenzyme is formed, which can initiate transcription.</text>
</comment>
<comment type="domain">
    <text evidence="1">The N-terminal domain is essential for RNAP assembly and basal transcription, whereas the C-terminal domain is involved in interaction with transcriptional regulators and with upstream promoter elements.</text>
</comment>
<comment type="similarity">
    <text evidence="1">Belongs to the RNA polymerase alpha chain family.</text>
</comment>
<keyword id="KW-0240">DNA-directed RNA polymerase</keyword>
<keyword id="KW-0548">Nucleotidyltransferase</keyword>
<keyword id="KW-0804">Transcription</keyword>
<keyword id="KW-0808">Transferase</keyword>
<dbReference type="EC" id="2.7.7.6" evidence="1"/>
<dbReference type="EMBL" id="CP001108">
    <property type="protein sequence ID" value="ACF47047.1"/>
    <property type="molecule type" value="Genomic_DNA"/>
</dbReference>
<dbReference type="RefSeq" id="WP_012506580.1">
    <property type="nucleotide sequence ID" value="NC_011059.1"/>
</dbReference>
<dbReference type="SMR" id="B4S5A1"/>
<dbReference type="STRING" id="290512.Paes_2037"/>
<dbReference type="KEGG" id="paa:Paes_2037"/>
<dbReference type="eggNOG" id="COG0202">
    <property type="taxonomic scope" value="Bacteria"/>
</dbReference>
<dbReference type="HOGENOM" id="CLU_053084_0_1_10"/>
<dbReference type="Proteomes" id="UP000002725">
    <property type="component" value="Chromosome"/>
</dbReference>
<dbReference type="GO" id="GO:0005737">
    <property type="term" value="C:cytoplasm"/>
    <property type="evidence" value="ECO:0007669"/>
    <property type="project" value="UniProtKB-ARBA"/>
</dbReference>
<dbReference type="GO" id="GO:0000428">
    <property type="term" value="C:DNA-directed RNA polymerase complex"/>
    <property type="evidence" value="ECO:0007669"/>
    <property type="project" value="UniProtKB-KW"/>
</dbReference>
<dbReference type="GO" id="GO:0003677">
    <property type="term" value="F:DNA binding"/>
    <property type="evidence" value="ECO:0007669"/>
    <property type="project" value="UniProtKB-UniRule"/>
</dbReference>
<dbReference type="GO" id="GO:0003899">
    <property type="term" value="F:DNA-directed RNA polymerase activity"/>
    <property type="evidence" value="ECO:0007669"/>
    <property type="project" value="UniProtKB-UniRule"/>
</dbReference>
<dbReference type="GO" id="GO:0046983">
    <property type="term" value="F:protein dimerization activity"/>
    <property type="evidence" value="ECO:0007669"/>
    <property type="project" value="InterPro"/>
</dbReference>
<dbReference type="GO" id="GO:0006351">
    <property type="term" value="P:DNA-templated transcription"/>
    <property type="evidence" value="ECO:0007669"/>
    <property type="project" value="UniProtKB-UniRule"/>
</dbReference>
<dbReference type="CDD" id="cd06928">
    <property type="entry name" value="RNAP_alpha_NTD"/>
    <property type="match status" value="1"/>
</dbReference>
<dbReference type="FunFam" id="2.170.120.12:FF:000001">
    <property type="entry name" value="DNA-directed RNA polymerase subunit alpha"/>
    <property type="match status" value="1"/>
</dbReference>
<dbReference type="Gene3D" id="1.10.150.20">
    <property type="entry name" value="5' to 3' exonuclease, C-terminal subdomain"/>
    <property type="match status" value="1"/>
</dbReference>
<dbReference type="Gene3D" id="2.170.120.12">
    <property type="entry name" value="DNA-directed RNA polymerase, insert domain"/>
    <property type="match status" value="1"/>
</dbReference>
<dbReference type="Gene3D" id="3.30.1360.10">
    <property type="entry name" value="RNA polymerase, RBP11-like subunit"/>
    <property type="match status" value="1"/>
</dbReference>
<dbReference type="HAMAP" id="MF_00059">
    <property type="entry name" value="RNApol_bact_RpoA"/>
    <property type="match status" value="1"/>
</dbReference>
<dbReference type="InterPro" id="IPR011262">
    <property type="entry name" value="DNA-dir_RNA_pol_insert"/>
</dbReference>
<dbReference type="InterPro" id="IPR011263">
    <property type="entry name" value="DNA-dir_RNA_pol_RpoA/D/Rpb3"/>
</dbReference>
<dbReference type="InterPro" id="IPR011773">
    <property type="entry name" value="DNA-dir_RpoA"/>
</dbReference>
<dbReference type="InterPro" id="IPR036603">
    <property type="entry name" value="RBP11-like"/>
</dbReference>
<dbReference type="InterPro" id="IPR011260">
    <property type="entry name" value="RNAP_asu_C"/>
</dbReference>
<dbReference type="InterPro" id="IPR036643">
    <property type="entry name" value="RNApol_insert_sf"/>
</dbReference>
<dbReference type="NCBIfam" id="NF003513">
    <property type="entry name" value="PRK05182.1-2"/>
    <property type="match status" value="1"/>
</dbReference>
<dbReference type="NCBIfam" id="NF003516">
    <property type="entry name" value="PRK05182.2-2"/>
    <property type="match status" value="1"/>
</dbReference>
<dbReference type="NCBIfam" id="NF003519">
    <property type="entry name" value="PRK05182.2-5"/>
    <property type="match status" value="1"/>
</dbReference>
<dbReference type="NCBIfam" id="TIGR02027">
    <property type="entry name" value="rpoA"/>
    <property type="match status" value="1"/>
</dbReference>
<dbReference type="Pfam" id="PF01000">
    <property type="entry name" value="RNA_pol_A_bac"/>
    <property type="match status" value="1"/>
</dbReference>
<dbReference type="Pfam" id="PF03118">
    <property type="entry name" value="RNA_pol_A_CTD"/>
    <property type="match status" value="1"/>
</dbReference>
<dbReference type="Pfam" id="PF01193">
    <property type="entry name" value="RNA_pol_L"/>
    <property type="match status" value="1"/>
</dbReference>
<dbReference type="SMART" id="SM00662">
    <property type="entry name" value="RPOLD"/>
    <property type="match status" value="1"/>
</dbReference>
<dbReference type="SUPFAM" id="SSF47789">
    <property type="entry name" value="C-terminal domain of RNA polymerase alpha subunit"/>
    <property type="match status" value="1"/>
</dbReference>
<dbReference type="SUPFAM" id="SSF56553">
    <property type="entry name" value="Insert subdomain of RNA polymerase alpha subunit"/>
    <property type="match status" value="1"/>
</dbReference>
<dbReference type="SUPFAM" id="SSF55257">
    <property type="entry name" value="RBP11-like subunits of RNA polymerase"/>
    <property type="match status" value="1"/>
</dbReference>
<evidence type="ECO:0000255" key="1">
    <source>
        <dbReference type="HAMAP-Rule" id="MF_00059"/>
    </source>
</evidence>
<reference key="1">
    <citation type="submission" date="2008-06" db="EMBL/GenBank/DDBJ databases">
        <title>Complete sequence of chromosome of Prosthecochloris aestuarii DSM 271.</title>
        <authorList>
            <consortium name="US DOE Joint Genome Institute"/>
            <person name="Lucas S."/>
            <person name="Copeland A."/>
            <person name="Lapidus A."/>
            <person name="Glavina del Rio T."/>
            <person name="Dalin E."/>
            <person name="Tice H."/>
            <person name="Bruce D."/>
            <person name="Goodwin L."/>
            <person name="Pitluck S."/>
            <person name="Schmutz J."/>
            <person name="Larimer F."/>
            <person name="Land M."/>
            <person name="Hauser L."/>
            <person name="Kyrpides N."/>
            <person name="Anderson I."/>
            <person name="Liu Z."/>
            <person name="Li T."/>
            <person name="Zhao F."/>
            <person name="Overmann J."/>
            <person name="Bryant D.A."/>
            <person name="Richardson P."/>
        </authorList>
    </citation>
    <scope>NUCLEOTIDE SEQUENCE [LARGE SCALE GENOMIC DNA]</scope>
    <source>
        <strain>DSM 271 / SK 413</strain>
    </source>
</reference>
<gene>
    <name evidence="1" type="primary">rpoA</name>
    <name type="ordered locus">Paes_2037</name>
</gene>
<organism>
    <name type="scientific">Prosthecochloris aestuarii (strain DSM 271 / SK 413)</name>
    <dbReference type="NCBI Taxonomy" id="290512"/>
    <lineage>
        <taxon>Bacteria</taxon>
        <taxon>Pseudomonadati</taxon>
        <taxon>Chlorobiota</taxon>
        <taxon>Chlorobiia</taxon>
        <taxon>Chlorobiales</taxon>
        <taxon>Chlorobiaceae</taxon>
        <taxon>Prosthecochloris</taxon>
    </lineage>
</organism>
<proteinExistence type="inferred from homology"/>
<accession>B4S5A1</accession>
<sequence>MIYQMQMPERIEVDEATHSESIGQFVAQPLERGYGVTLGNAMRRVLLASLPGTAITGIKIDGVFHEFSTIDGVREDVPEIVLNLKKVRFKSTTKRSCKTSLSIEGPADFKAGDIVAQEGEFEVLNKDMHIATLNGDAKLNIDIYIGRGRGYVPAEENRGEGMPIGFIAIDSIFTPIKNVKFSVENTRVGQRTDYEKMILDVETDGSISPDDSISLAGKVINEHVSLFANFSPTEEEFAEEEYKQQDDEFENMRKLLQTRIEDLDLSVRSHNCLRLAEIDTLGDLVSRKEDELLTYKNFGKKSLTELKEQLDKCELKFGMDITKYQMKS</sequence>
<protein>
    <recommendedName>
        <fullName evidence="1">DNA-directed RNA polymerase subunit alpha</fullName>
        <shortName evidence="1">RNAP subunit alpha</shortName>
        <ecNumber evidence="1">2.7.7.6</ecNumber>
    </recommendedName>
    <alternativeName>
        <fullName evidence="1">RNA polymerase subunit alpha</fullName>
    </alternativeName>
    <alternativeName>
        <fullName evidence="1">Transcriptase subunit alpha</fullName>
    </alternativeName>
</protein>
<feature type="chain" id="PRO_1000091962" description="DNA-directed RNA polymerase subunit alpha">
    <location>
        <begin position="1"/>
        <end position="328"/>
    </location>
</feature>
<feature type="region of interest" description="Alpha N-terminal domain (alpha-NTD)" evidence="1">
    <location>
        <begin position="1"/>
        <end position="231"/>
    </location>
</feature>
<feature type="region of interest" description="Alpha C-terminal domain (alpha-CTD)" evidence="1">
    <location>
        <begin position="252"/>
        <end position="328"/>
    </location>
</feature>